<proteinExistence type="inferred from homology"/>
<reference key="1">
    <citation type="journal article" date="2011" name="J. Bacteriol.">
        <title>Comparative genomics of 28 Salmonella enterica isolates: evidence for CRISPR-mediated adaptive sublineage evolution.</title>
        <authorList>
            <person name="Fricke W.F."/>
            <person name="Mammel M.K."/>
            <person name="McDermott P.F."/>
            <person name="Tartera C."/>
            <person name="White D.G."/>
            <person name="Leclerc J.E."/>
            <person name="Ravel J."/>
            <person name="Cebula T.A."/>
        </authorList>
    </citation>
    <scope>NUCLEOTIDE SEQUENCE [LARGE SCALE GENOMIC DNA]</scope>
    <source>
        <strain>SL254</strain>
    </source>
</reference>
<sequence length="164" mass="18504">MERFLENVMYASRWLLAPVYFGLSLALIALALKFFQEILHVLPNVFALAEADLILVLLSLVDMTLVGGLLVMVMFSGYENFVSQLDISAGKEKLNWLGKMDATSLKNKVAASIVAISSIHLLRVFMDAKNVPDNKLMWYVIIHLTFVLSAFVMGYLDRLTRHNH</sequence>
<name>YQHA_SALNS</name>
<comment type="subcellular location">
    <subcellularLocation>
        <location evidence="1">Cell membrane</location>
        <topology evidence="1">Multi-pass membrane protein</topology>
    </subcellularLocation>
</comment>
<comment type="similarity">
    <text evidence="1">Belongs to the UPF0114 family.</text>
</comment>
<dbReference type="EMBL" id="CP001113">
    <property type="protein sequence ID" value="ACF62568.1"/>
    <property type="molecule type" value="Genomic_DNA"/>
</dbReference>
<dbReference type="RefSeq" id="WP_000439335.1">
    <property type="nucleotide sequence ID" value="NZ_CCMR01000001.1"/>
</dbReference>
<dbReference type="KEGG" id="see:SNSL254_A3407"/>
<dbReference type="HOGENOM" id="CLU_097887_1_1_6"/>
<dbReference type="Proteomes" id="UP000008824">
    <property type="component" value="Chromosome"/>
</dbReference>
<dbReference type="GO" id="GO:0005886">
    <property type="term" value="C:plasma membrane"/>
    <property type="evidence" value="ECO:0007669"/>
    <property type="project" value="UniProtKB-SubCell"/>
</dbReference>
<dbReference type="HAMAP" id="MF_00143">
    <property type="entry name" value="UPF0114"/>
    <property type="match status" value="1"/>
</dbReference>
<dbReference type="InterPro" id="IPR005134">
    <property type="entry name" value="UPF0114"/>
</dbReference>
<dbReference type="InterPro" id="IPR020761">
    <property type="entry name" value="UPF0114_bac"/>
</dbReference>
<dbReference type="NCBIfam" id="TIGR00645">
    <property type="entry name" value="HI0507"/>
    <property type="match status" value="1"/>
</dbReference>
<dbReference type="PANTHER" id="PTHR38596">
    <property type="entry name" value="UPF0114 PROTEIN YQHA"/>
    <property type="match status" value="1"/>
</dbReference>
<dbReference type="PANTHER" id="PTHR38596:SF1">
    <property type="entry name" value="UPF0114 PROTEIN YQHA"/>
    <property type="match status" value="1"/>
</dbReference>
<dbReference type="Pfam" id="PF03350">
    <property type="entry name" value="UPF0114"/>
    <property type="match status" value="1"/>
</dbReference>
<accession>B4T5R6</accession>
<evidence type="ECO:0000255" key="1">
    <source>
        <dbReference type="HAMAP-Rule" id="MF_00143"/>
    </source>
</evidence>
<keyword id="KW-1003">Cell membrane</keyword>
<keyword id="KW-0472">Membrane</keyword>
<keyword id="KW-0812">Transmembrane</keyword>
<keyword id="KW-1133">Transmembrane helix</keyword>
<gene>
    <name evidence="1" type="primary">yqhA</name>
    <name type="ordered locus">SNSL254_A3407</name>
</gene>
<organism>
    <name type="scientific">Salmonella newport (strain SL254)</name>
    <dbReference type="NCBI Taxonomy" id="423368"/>
    <lineage>
        <taxon>Bacteria</taxon>
        <taxon>Pseudomonadati</taxon>
        <taxon>Pseudomonadota</taxon>
        <taxon>Gammaproteobacteria</taxon>
        <taxon>Enterobacterales</taxon>
        <taxon>Enterobacteriaceae</taxon>
        <taxon>Salmonella</taxon>
    </lineage>
</organism>
<protein>
    <recommendedName>
        <fullName evidence="1">UPF0114 protein YqhA</fullName>
    </recommendedName>
</protein>
<feature type="chain" id="PRO_1000096278" description="UPF0114 protein YqhA">
    <location>
        <begin position="1"/>
        <end position="164"/>
    </location>
</feature>
<feature type="transmembrane region" description="Helical" evidence="1">
    <location>
        <begin position="15"/>
        <end position="35"/>
    </location>
</feature>
<feature type="transmembrane region" description="Helical" evidence="1">
    <location>
        <begin position="53"/>
        <end position="73"/>
    </location>
</feature>
<feature type="transmembrane region" description="Helical" evidence="1">
    <location>
        <begin position="136"/>
        <end position="156"/>
    </location>
</feature>